<sequence length="475" mass="51890">MRNFTKQYINGEWVDSASGETIDVINPATEEVMGKIAKGNEEDVNKAVDAADKVYLEFRHSSVEERRELLDKIVKEYQNRKNDLIEAITDELGAPLSVSENVHYQMGLNHFTAARDALDSFQFEEQRGDDLVVKEAIGVAGLVTPWNFPTNQTSLKLAAAFAAGSPVVLKPSEETPFAAIILAEIFDKVGVPKGVFNLVNGDGSGVGNPLSEHPKVRMMSFTGSGPTGSKIMEKAAKDFKKVSLELGGKSPYIVLDDVDVEEAANATTKKVVNNTGQVCTAGTRVLIPESIKEDYLTAVKEAFSKVKVGQPREEGTQVGPIISKKQFDQVQDYIDKGINEGAELFYGGPGKPEGLDKGYFARPTIFINVDNHMTIAQEEIFGPVMSVITYNNLDEAIEIANDTKYGLAGYVIGKDKDTLRHVARSIEAGTIEINEAGRKPDLPFGGYKESGLGREWGDYGIEEFLEVKSIAGYFK</sequence>
<organism>
    <name type="scientific">Staphylococcus epidermidis (strain ATCC 35984 / DSM 28319 / BCRC 17069 / CCUG 31568 / BM 3577 / RP62A)</name>
    <dbReference type="NCBI Taxonomy" id="176279"/>
    <lineage>
        <taxon>Bacteria</taxon>
        <taxon>Bacillati</taxon>
        <taxon>Bacillota</taxon>
        <taxon>Bacilli</taxon>
        <taxon>Bacillales</taxon>
        <taxon>Staphylococcaceae</taxon>
        <taxon>Staphylococcus</taxon>
    </lineage>
</organism>
<dbReference type="EC" id="1.2.1.3"/>
<dbReference type="EMBL" id="CP000029">
    <property type="protein sequence ID" value="AAW55043.1"/>
    <property type="molecule type" value="Genomic_DNA"/>
</dbReference>
<dbReference type="RefSeq" id="WP_001832742.1">
    <property type="nucleotide sequence ID" value="NC_002976.3"/>
</dbReference>
<dbReference type="SMR" id="Q5HMA0"/>
<dbReference type="STRING" id="176279.SERP1729"/>
<dbReference type="KEGG" id="ser:SERP1729"/>
<dbReference type="eggNOG" id="COG1012">
    <property type="taxonomic scope" value="Bacteria"/>
</dbReference>
<dbReference type="HOGENOM" id="CLU_005391_0_2_9"/>
<dbReference type="Proteomes" id="UP000000531">
    <property type="component" value="Chromosome"/>
</dbReference>
<dbReference type="GO" id="GO:0004029">
    <property type="term" value="F:aldehyde dehydrogenase (NAD+) activity"/>
    <property type="evidence" value="ECO:0007669"/>
    <property type="project" value="UniProtKB-EC"/>
</dbReference>
<dbReference type="CDD" id="cd07138">
    <property type="entry name" value="ALDH_CddD_SSP0762"/>
    <property type="match status" value="1"/>
</dbReference>
<dbReference type="FunFam" id="3.40.309.10:FF:000012">
    <property type="entry name" value="Betaine aldehyde dehydrogenase"/>
    <property type="match status" value="1"/>
</dbReference>
<dbReference type="FunFam" id="3.40.605.10:FF:000007">
    <property type="entry name" value="NAD/NADP-dependent betaine aldehyde dehydrogenase"/>
    <property type="match status" value="1"/>
</dbReference>
<dbReference type="Gene3D" id="3.40.605.10">
    <property type="entry name" value="Aldehyde Dehydrogenase, Chain A, domain 1"/>
    <property type="match status" value="1"/>
</dbReference>
<dbReference type="Gene3D" id="3.40.309.10">
    <property type="entry name" value="Aldehyde Dehydrogenase, Chain A, domain 2"/>
    <property type="match status" value="1"/>
</dbReference>
<dbReference type="InterPro" id="IPR016161">
    <property type="entry name" value="Ald_DH/histidinol_DH"/>
</dbReference>
<dbReference type="InterPro" id="IPR016163">
    <property type="entry name" value="Ald_DH_C"/>
</dbReference>
<dbReference type="InterPro" id="IPR016160">
    <property type="entry name" value="Ald_DH_CS_CYS"/>
</dbReference>
<dbReference type="InterPro" id="IPR029510">
    <property type="entry name" value="Ald_DH_CS_GLU"/>
</dbReference>
<dbReference type="InterPro" id="IPR016162">
    <property type="entry name" value="Ald_DH_N"/>
</dbReference>
<dbReference type="InterPro" id="IPR015590">
    <property type="entry name" value="Aldehyde_DH_dom"/>
</dbReference>
<dbReference type="PANTHER" id="PTHR42804">
    <property type="entry name" value="ALDEHYDE DEHYDROGENASE"/>
    <property type="match status" value="1"/>
</dbReference>
<dbReference type="PANTHER" id="PTHR42804:SF1">
    <property type="entry name" value="ALDEHYDE DEHYDROGENASE-RELATED"/>
    <property type="match status" value="1"/>
</dbReference>
<dbReference type="Pfam" id="PF00171">
    <property type="entry name" value="Aldedh"/>
    <property type="match status" value="1"/>
</dbReference>
<dbReference type="SUPFAM" id="SSF53720">
    <property type="entry name" value="ALDH-like"/>
    <property type="match status" value="1"/>
</dbReference>
<dbReference type="PROSITE" id="PS00070">
    <property type="entry name" value="ALDEHYDE_DEHYDR_CYS"/>
    <property type="match status" value="1"/>
</dbReference>
<dbReference type="PROSITE" id="PS00687">
    <property type="entry name" value="ALDEHYDE_DEHYDR_GLU"/>
    <property type="match status" value="1"/>
</dbReference>
<proteinExistence type="inferred from homology"/>
<protein>
    <recommendedName>
        <fullName>Putative aldehyde dehydrogenase SERP1729</fullName>
        <ecNumber>1.2.1.3</ecNumber>
    </recommendedName>
</protein>
<feature type="chain" id="PRO_0000293562" description="Putative aldehyde dehydrogenase SERP1729">
    <location>
        <begin position="1"/>
        <end position="475"/>
    </location>
</feature>
<feature type="active site" evidence="1">
    <location>
        <position position="245"/>
    </location>
</feature>
<feature type="active site" evidence="1">
    <location>
        <position position="279"/>
    </location>
</feature>
<feature type="binding site" evidence="1">
    <location>
        <begin position="201"/>
        <end position="207"/>
    </location>
    <ligand>
        <name>NAD(+)</name>
        <dbReference type="ChEBI" id="CHEBI:57540"/>
    </ligand>
</feature>
<reference key="1">
    <citation type="journal article" date="2005" name="J. Bacteriol.">
        <title>Insights on evolution of virulence and resistance from the complete genome analysis of an early methicillin-resistant Staphylococcus aureus strain and a biofilm-producing methicillin-resistant Staphylococcus epidermidis strain.</title>
        <authorList>
            <person name="Gill S.R."/>
            <person name="Fouts D.E."/>
            <person name="Archer G.L."/>
            <person name="Mongodin E.F."/>
            <person name="DeBoy R.T."/>
            <person name="Ravel J."/>
            <person name="Paulsen I.T."/>
            <person name="Kolonay J.F."/>
            <person name="Brinkac L.M."/>
            <person name="Beanan M.J."/>
            <person name="Dodson R.J."/>
            <person name="Daugherty S.C."/>
            <person name="Madupu R."/>
            <person name="Angiuoli S.V."/>
            <person name="Durkin A.S."/>
            <person name="Haft D.H."/>
            <person name="Vamathevan J.J."/>
            <person name="Khouri H."/>
            <person name="Utterback T.R."/>
            <person name="Lee C."/>
            <person name="Dimitrov G."/>
            <person name="Jiang L."/>
            <person name="Qin H."/>
            <person name="Weidman J."/>
            <person name="Tran K."/>
            <person name="Kang K.H."/>
            <person name="Hance I.R."/>
            <person name="Nelson K.E."/>
            <person name="Fraser C.M."/>
        </authorList>
    </citation>
    <scope>NUCLEOTIDE SEQUENCE [LARGE SCALE GENOMIC DNA]</scope>
    <source>
        <strain>ATCC 35984 / DSM 28319 / BCRC 17069 / CCUG 31568 / BM 3577 / RP62A</strain>
    </source>
</reference>
<comment type="catalytic activity">
    <reaction>
        <text>an aldehyde + NAD(+) + H2O = a carboxylate + NADH + 2 H(+)</text>
        <dbReference type="Rhea" id="RHEA:16185"/>
        <dbReference type="ChEBI" id="CHEBI:15377"/>
        <dbReference type="ChEBI" id="CHEBI:15378"/>
        <dbReference type="ChEBI" id="CHEBI:17478"/>
        <dbReference type="ChEBI" id="CHEBI:29067"/>
        <dbReference type="ChEBI" id="CHEBI:57540"/>
        <dbReference type="ChEBI" id="CHEBI:57945"/>
        <dbReference type="EC" id="1.2.1.3"/>
    </reaction>
</comment>
<comment type="similarity">
    <text evidence="2">Belongs to the aldehyde dehydrogenase family.</text>
</comment>
<name>ALD1_STAEQ</name>
<keyword id="KW-0520">NAD</keyword>
<keyword id="KW-0560">Oxidoreductase</keyword>
<keyword id="KW-1185">Reference proteome</keyword>
<accession>Q5HMA0</accession>
<gene>
    <name type="ordered locus">SERP1729</name>
</gene>
<evidence type="ECO:0000250" key="1"/>
<evidence type="ECO:0000305" key="2"/>